<name>RS13_GEOSW</name>
<proteinExistence type="inferred from homology"/>
<reference key="1">
    <citation type="submission" date="2009-06" db="EMBL/GenBank/DDBJ databases">
        <title>Complete sequence of chromosome of Geopacillus sp. WCH70.</title>
        <authorList>
            <consortium name="US DOE Joint Genome Institute"/>
            <person name="Lucas S."/>
            <person name="Copeland A."/>
            <person name="Lapidus A."/>
            <person name="Glavina del Rio T."/>
            <person name="Dalin E."/>
            <person name="Tice H."/>
            <person name="Bruce D."/>
            <person name="Goodwin L."/>
            <person name="Pitluck S."/>
            <person name="Chertkov O."/>
            <person name="Brettin T."/>
            <person name="Detter J.C."/>
            <person name="Han C."/>
            <person name="Larimer F."/>
            <person name="Land M."/>
            <person name="Hauser L."/>
            <person name="Kyrpides N."/>
            <person name="Mikhailova N."/>
            <person name="Brumm P."/>
            <person name="Mead D.A."/>
            <person name="Richardson P."/>
        </authorList>
    </citation>
    <scope>NUCLEOTIDE SEQUENCE [LARGE SCALE GENOMIC DNA]</scope>
    <source>
        <strain>WCH70</strain>
    </source>
</reference>
<gene>
    <name evidence="1" type="primary">rpsM</name>
    <name type="ordered locus">GWCH70_0136</name>
</gene>
<sequence length="121" mass="13746">MARIAGVDIPRDKRVVISLTYIYGIGKSTAKKILAEAGVSEDTRVRDLTEEELGRIREIVGRLKVEGDLRREVSLNIKRLIEIGCYRGIRHRRGLPVRGQNTKNNARTRKGPRRTVANKKK</sequence>
<protein>
    <recommendedName>
        <fullName evidence="1">Small ribosomal subunit protein uS13</fullName>
    </recommendedName>
    <alternativeName>
        <fullName evidence="3">30S ribosomal protein S13</fullName>
    </alternativeName>
</protein>
<dbReference type="EMBL" id="CP001638">
    <property type="protein sequence ID" value="ACS23076.1"/>
    <property type="molecule type" value="Genomic_DNA"/>
</dbReference>
<dbReference type="SMR" id="C5D3U2"/>
<dbReference type="STRING" id="471223.GWCH70_0136"/>
<dbReference type="KEGG" id="gwc:GWCH70_0136"/>
<dbReference type="eggNOG" id="COG0099">
    <property type="taxonomic scope" value="Bacteria"/>
</dbReference>
<dbReference type="HOGENOM" id="CLU_103849_1_1_9"/>
<dbReference type="OrthoDB" id="9803610at2"/>
<dbReference type="GO" id="GO:0005829">
    <property type="term" value="C:cytosol"/>
    <property type="evidence" value="ECO:0007669"/>
    <property type="project" value="TreeGrafter"/>
</dbReference>
<dbReference type="GO" id="GO:0015935">
    <property type="term" value="C:small ribosomal subunit"/>
    <property type="evidence" value="ECO:0007669"/>
    <property type="project" value="TreeGrafter"/>
</dbReference>
<dbReference type="GO" id="GO:0019843">
    <property type="term" value="F:rRNA binding"/>
    <property type="evidence" value="ECO:0007669"/>
    <property type="project" value="UniProtKB-UniRule"/>
</dbReference>
<dbReference type="GO" id="GO:0003735">
    <property type="term" value="F:structural constituent of ribosome"/>
    <property type="evidence" value="ECO:0007669"/>
    <property type="project" value="InterPro"/>
</dbReference>
<dbReference type="GO" id="GO:0000049">
    <property type="term" value="F:tRNA binding"/>
    <property type="evidence" value="ECO:0007669"/>
    <property type="project" value="UniProtKB-UniRule"/>
</dbReference>
<dbReference type="GO" id="GO:0006412">
    <property type="term" value="P:translation"/>
    <property type="evidence" value="ECO:0007669"/>
    <property type="project" value="UniProtKB-UniRule"/>
</dbReference>
<dbReference type="FunFam" id="1.10.8.50:FF:000001">
    <property type="entry name" value="30S ribosomal protein S13"/>
    <property type="match status" value="1"/>
</dbReference>
<dbReference type="FunFam" id="4.10.910.10:FF:000001">
    <property type="entry name" value="30S ribosomal protein S13"/>
    <property type="match status" value="1"/>
</dbReference>
<dbReference type="Gene3D" id="1.10.8.50">
    <property type="match status" value="1"/>
</dbReference>
<dbReference type="Gene3D" id="4.10.910.10">
    <property type="entry name" value="30s ribosomal protein s13, domain 2"/>
    <property type="match status" value="1"/>
</dbReference>
<dbReference type="HAMAP" id="MF_01315">
    <property type="entry name" value="Ribosomal_uS13"/>
    <property type="match status" value="1"/>
</dbReference>
<dbReference type="InterPro" id="IPR027437">
    <property type="entry name" value="Rbsml_uS13_C"/>
</dbReference>
<dbReference type="InterPro" id="IPR001892">
    <property type="entry name" value="Ribosomal_uS13"/>
</dbReference>
<dbReference type="InterPro" id="IPR010979">
    <property type="entry name" value="Ribosomal_uS13-like_H2TH"/>
</dbReference>
<dbReference type="InterPro" id="IPR019980">
    <property type="entry name" value="Ribosomal_uS13_bac-type"/>
</dbReference>
<dbReference type="InterPro" id="IPR018269">
    <property type="entry name" value="Ribosomal_uS13_CS"/>
</dbReference>
<dbReference type="NCBIfam" id="TIGR03631">
    <property type="entry name" value="uS13_bact"/>
    <property type="match status" value="1"/>
</dbReference>
<dbReference type="PANTHER" id="PTHR10871">
    <property type="entry name" value="30S RIBOSOMAL PROTEIN S13/40S RIBOSOMAL PROTEIN S18"/>
    <property type="match status" value="1"/>
</dbReference>
<dbReference type="PANTHER" id="PTHR10871:SF1">
    <property type="entry name" value="SMALL RIBOSOMAL SUBUNIT PROTEIN US13M"/>
    <property type="match status" value="1"/>
</dbReference>
<dbReference type="Pfam" id="PF00416">
    <property type="entry name" value="Ribosomal_S13"/>
    <property type="match status" value="1"/>
</dbReference>
<dbReference type="PIRSF" id="PIRSF002134">
    <property type="entry name" value="Ribosomal_S13"/>
    <property type="match status" value="1"/>
</dbReference>
<dbReference type="SUPFAM" id="SSF46946">
    <property type="entry name" value="S13-like H2TH domain"/>
    <property type="match status" value="1"/>
</dbReference>
<dbReference type="PROSITE" id="PS00646">
    <property type="entry name" value="RIBOSOMAL_S13_1"/>
    <property type="match status" value="1"/>
</dbReference>
<dbReference type="PROSITE" id="PS50159">
    <property type="entry name" value="RIBOSOMAL_S13_2"/>
    <property type="match status" value="1"/>
</dbReference>
<feature type="chain" id="PRO_1000214397" description="Small ribosomal subunit protein uS13">
    <location>
        <begin position="1"/>
        <end position="121"/>
    </location>
</feature>
<feature type="region of interest" description="Disordered" evidence="2">
    <location>
        <begin position="94"/>
        <end position="121"/>
    </location>
</feature>
<feature type="compositionally biased region" description="Basic residues" evidence="2">
    <location>
        <begin position="106"/>
        <end position="121"/>
    </location>
</feature>
<evidence type="ECO:0000255" key="1">
    <source>
        <dbReference type="HAMAP-Rule" id="MF_01315"/>
    </source>
</evidence>
<evidence type="ECO:0000256" key="2">
    <source>
        <dbReference type="SAM" id="MobiDB-lite"/>
    </source>
</evidence>
<evidence type="ECO:0000305" key="3"/>
<keyword id="KW-0687">Ribonucleoprotein</keyword>
<keyword id="KW-0689">Ribosomal protein</keyword>
<keyword id="KW-0694">RNA-binding</keyword>
<keyword id="KW-0699">rRNA-binding</keyword>
<keyword id="KW-0820">tRNA-binding</keyword>
<comment type="function">
    <text evidence="1">Located at the top of the head of the 30S subunit, it contacts several helices of the 16S rRNA. In the 70S ribosome it contacts the 23S rRNA (bridge B1a) and protein L5 of the 50S subunit (bridge B1b), connecting the 2 subunits; these bridges are implicated in subunit movement. Contacts the tRNAs in the A and P-sites.</text>
</comment>
<comment type="subunit">
    <text evidence="1">Part of the 30S ribosomal subunit. Forms a loose heterodimer with protein S19. Forms two bridges to the 50S subunit in the 70S ribosome.</text>
</comment>
<comment type="similarity">
    <text evidence="1">Belongs to the universal ribosomal protein uS13 family.</text>
</comment>
<organism>
    <name type="scientific">Geobacillus sp. (strain WCH70)</name>
    <dbReference type="NCBI Taxonomy" id="471223"/>
    <lineage>
        <taxon>Bacteria</taxon>
        <taxon>Bacillati</taxon>
        <taxon>Bacillota</taxon>
        <taxon>Bacilli</taxon>
        <taxon>Bacillales</taxon>
        <taxon>Anoxybacillaceae</taxon>
        <taxon>Geobacillus</taxon>
    </lineage>
</organism>
<accession>C5D3U2</accession>